<protein>
    <recommendedName>
        <fullName>Autoinducer 2 import system permease protein LsrD</fullName>
        <shortName>AI-2 import system permease protein LsrD</shortName>
    </recommendedName>
</protein>
<comment type="function">
    <text evidence="1">Part of the ABC transporter complex LsrABCD involved in autoinducer 2 (AI-2) import. Probably responsible for the translocation of the substrate across the membrane (By similarity).</text>
</comment>
<comment type="subunit">
    <text evidence="1">The complex is composed of two ATP-binding proteins (LsrA), two transmembrane proteins (LsrC and LsrD) and a solute-binding protein (LsrB).</text>
</comment>
<comment type="subcellular location">
    <subcellularLocation>
        <location evidence="1">Cell inner membrane</location>
        <topology evidence="1">Multi-pass membrane protein</topology>
    </subcellularLocation>
</comment>
<comment type="similarity">
    <text evidence="3">Belongs to the binding-protein-dependent transport system permease family. AraH/RbsC subfamily.</text>
</comment>
<dbReference type="EMBL" id="CP000950">
    <property type="protein sequence ID" value="ACA69919.1"/>
    <property type="molecule type" value="Genomic_DNA"/>
</dbReference>
<dbReference type="RefSeq" id="WP_011191663.1">
    <property type="nucleotide sequence ID" value="NZ_CP009792.1"/>
</dbReference>
<dbReference type="GeneID" id="49787447"/>
<dbReference type="KEGG" id="ypy:YPK_3652"/>
<dbReference type="PATRIC" id="fig|502800.11.peg.4407"/>
<dbReference type="GO" id="GO:0005886">
    <property type="term" value="C:plasma membrane"/>
    <property type="evidence" value="ECO:0007669"/>
    <property type="project" value="UniProtKB-SubCell"/>
</dbReference>
<dbReference type="GO" id="GO:0022857">
    <property type="term" value="F:transmembrane transporter activity"/>
    <property type="evidence" value="ECO:0007669"/>
    <property type="project" value="InterPro"/>
</dbReference>
<dbReference type="CDD" id="cd06579">
    <property type="entry name" value="TM_PBP1_transp_AraH_like"/>
    <property type="match status" value="1"/>
</dbReference>
<dbReference type="InterPro" id="IPR001851">
    <property type="entry name" value="ABC_transp_permease"/>
</dbReference>
<dbReference type="NCBIfam" id="NF011612">
    <property type="entry name" value="PRK15038.1"/>
    <property type="match status" value="1"/>
</dbReference>
<dbReference type="PANTHER" id="PTHR32196">
    <property type="entry name" value="ABC TRANSPORTER PERMEASE PROTEIN YPHD-RELATED-RELATED"/>
    <property type="match status" value="1"/>
</dbReference>
<dbReference type="PANTHER" id="PTHR32196:SF71">
    <property type="entry name" value="AUTOINDUCER 2 IMPORT SYSTEM PERMEASE PROTEIN LSRD"/>
    <property type="match status" value="1"/>
</dbReference>
<dbReference type="Pfam" id="PF02653">
    <property type="entry name" value="BPD_transp_2"/>
    <property type="match status" value="1"/>
</dbReference>
<feature type="chain" id="PRO_0000351388" description="Autoinducer 2 import system permease protein LsrD">
    <location>
        <begin position="1"/>
        <end position="333"/>
    </location>
</feature>
<feature type="transmembrane region" description="Helical" evidence="2">
    <location>
        <begin position="7"/>
        <end position="27"/>
    </location>
</feature>
<feature type="transmembrane region" description="Helical" evidence="2">
    <location>
        <begin position="45"/>
        <end position="65"/>
    </location>
</feature>
<feature type="transmembrane region" description="Helical" evidence="2">
    <location>
        <begin position="67"/>
        <end position="87"/>
    </location>
</feature>
<feature type="transmembrane region" description="Helical" evidence="2">
    <location>
        <begin position="90"/>
        <end position="110"/>
    </location>
</feature>
<feature type="transmembrane region" description="Helical" evidence="2">
    <location>
        <begin position="118"/>
        <end position="138"/>
    </location>
</feature>
<feature type="transmembrane region" description="Helical" evidence="2">
    <location>
        <begin position="162"/>
        <end position="182"/>
    </location>
</feature>
<feature type="transmembrane region" description="Helical" evidence="2">
    <location>
        <begin position="212"/>
        <end position="232"/>
    </location>
</feature>
<feature type="transmembrane region" description="Helical" evidence="2">
    <location>
        <begin position="240"/>
        <end position="260"/>
    </location>
</feature>
<feature type="transmembrane region" description="Helical" evidence="2">
    <location>
        <begin position="261"/>
        <end position="281"/>
    </location>
</feature>
<feature type="transmembrane region" description="Helical" evidence="2">
    <location>
        <begin position="288"/>
        <end position="308"/>
    </location>
</feature>
<gene>
    <name type="primary">lsrD</name>
    <name type="ordered locus">YPK_3652</name>
</gene>
<proteinExistence type="inferred from homology"/>
<name>LSRD_YERPY</name>
<organism>
    <name type="scientific">Yersinia pseudotuberculosis serotype O:3 (strain YPIII)</name>
    <dbReference type="NCBI Taxonomy" id="502800"/>
    <lineage>
        <taxon>Bacteria</taxon>
        <taxon>Pseudomonadati</taxon>
        <taxon>Pseudomonadota</taxon>
        <taxon>Gammaproteobacteria</taxon>
        <taxon>Enterobacterales</taxon>
        <taxon>Yersiniaceae</taxon>
        <taxon>Yersinia</taxon>
    </lineage>
</organism>
<keyword id="KW-0997">Cell inner membrane</keyword>
<keyword id="KW-1003">Cell membrane</keyword>
<keyword id="KW-0472">Membrane</keyword>
<keyword id="KW-0812">Transmembrane</keyword>
<keyword id="KW-1133">Transmembrane helix</keyword>
<keyword id="KW-0813">Transport</keyword>
<sequence>MNLYRRYGWELTLAALLVLEILLFGLSNSRMLDINVLLFSTSDFICIGIVALPLTMVIVSGGIDISFGSTIGLCAIFLGIVFQAGVPMSVAIPLTVLVGALCGLINAGLILYTGVNPLVITLGTLYLFGGSALLLSGLSGATGYEGIGGFPAAFTDFANQTLFGLPIPLVIFMLCVLLFWLLMHRTHSGRHVFLIGQSSRVARYSALPIARTLCMLYAMTGVASAIAAILLVSYFGSARSDLGASFLMPAITAVVLGGANIYGGSGSILGTALAVLLVGYLQQGLQMIGTPNQISSALSGALLILVVVGRSISLHRHLIYEWLQRRRSRKASA</sequence>
<reference key="1">
    <citation type="submission" date="2008-02" db="EMBL/GenBank/DDBJ databases">
        <title>Complete sequence of Yersinia pseudotuberculosis YPIII.</title>
        <authorList>
            <consortium name="US DOE Joint Genome Institute"/>
            <person name="Copeland A."/>
            <person name="Lucas S."/>
            <person name="Lapidus A."/>
            <person name="Glavina del Rio T."/>
            <person name="Dalin E."/>
            <person name="Tice H."/>
            <person name="Bruce D."/>
            <person name="Goodwin L."/>
            <person name="Pitluck S."/>
            <person name="Munk A.C."/>
            <person name="Brettin T."/>
            <person name="Detter J.C."/>
            <person name="Han C."/>
            <person name="Tapia R."/>
            <person name="Schmutz J."/>
            <person name="Larimer F."/>
            <person name="Land M."/>
            <person name="Hauser L."/>
            <person name="Challacombe J.F."/>
            <person name="Green L."/>
            <person name="Lindler L.E."/>
            <person name="Nikolich M.P."/>
            <person name="Richardson P."/>
        </authorList>
    </citation>
    <scope>NUCLEOTIDE SEQUENCE [LARGE SCALE GENOMIC DNA]</scope>
    <source>
        <strain>YPIII</strain>
    </source>
</reference>
<accession>B1JLQ2</accession>
<evidence type="ECO:0000250" key="1"/>
<evidence type="ECO:0000255" key="2"/>
<evidence type="ECO:0000305" key="3"/>